<dbReference type="EC" id="1.4.99.-" evidence="1"/>
<dbReference type="EMBL" id="AM039952">
    <property type="protein sequence ID" value="CAJ25540.1"/>
    <property type="molecule type" value="Genomic_DNA"/>
</dbReference>
<dbReference type="RefSeq" id="WP_008578034.1">
    <property type="nucleotide sequence ID" value="NZ_CP017190.1"/>
</dbReference>
<dbReference type="SMR" id="Q3BNX3"/>
<dbReference type="STRING" id="456327.BJD11_03590"/>
<dbReference type="KEGG" id="xcv:XCV3809"/>
<dbReference type="eggNOG" id="COG0665">
    <property type="taxonomic scope" value="Bacteria"/>
</dbReference>
<dbReference type="HOGENOM" id="CLU_007884_9_2_6"/>
<dbReference type="UniPathway" id="UPA00043">
    <property type="reaction ID" value="UER00498"/>
</dbReference>
<dbReference type="Proteomes" id="UP000007069">
    <property type="component" value="Chromosome"/>
</dbReference>
<dbReference type="GO" id="GO:0005737">
    <property type="term" value="C:cytoplasm"/>
    <property type="evidence" value="ECO:0007669"/>
    <property type="project" value="TreeGrafter"/>
</dbReference>
<dbReference type="GO" id="GO:0005886">
    <property type="term" value="C:plasma membrane"/>
    <property type="evidence" value="ECO:0007669"/>
    <property type="project" value="TreeGrafter"/>
</dbReference>
<dbReference type="GO" id="GO:0008718">
    <property type="term" value="F:D-amino-acid dehydrogenase activity"/>
    <property type="evidence" value="ECO:0007669"/>
    <property type="project" value="UniProtKB-UniRule"/>
</dbReference>
<dbReference type="GO" id="GO:0055130">
    <property type="term" value="P:D-alanine catabolic process"/>
    <property type="evidence" value="ECO:0007669"/>
    <property type="project" value="UniProtKB-UniPathway"/>
</dbReference>
<dbReference type="FunFam" id="3.50.50.60:FF:000020">
    <property type="entry name" value="D-amino acid dehydrogenase"/>
    <property type="match status" value="1"/>
</dbReference>
<dbReference type="Gene3D" id="3.30.9.10">
    <property type="entry name" value="D-Amino Acid Oxidase, subunit A, domain 2"/>
    <property type="match status" value="1"/>
</dbReference>
<dbReference type="Gene3D" id="3.50.50.60">
    <property type="entry name" value="FAD/NAD(P)-binding domain"/>
    <property type="match status" value="2"/>
</dbReference>
<dbReference type="HAMAP" id="MF_01202">
    <property type="entry name" value="DadA"/>
    <property type="match status" value="1"/>
</dbReference>
<dbReference type="InterPro" id="IPR023080">
    <property type="entry name" value="DadA"/>
</dbReference>
<dbReference type="InterPro" id="IPR006076">
    <property type="entry name" value="FAD-dep_OxRdtase"/>
</dbReference>
<dbReference type="InterPro" id="IPR036188">
    <property type="entry name" value="FAD/NAD-bd_sf"/>
</dbReference>
<dbReference type="NCBIfam" id="NF001933">
    <property type="entry name" value="PRK00711.1"/>
    <property type="match status" value="1"/>
</dbReference>
<dbReference type="PANTHER" id="PTHR13847:SF280">
    <property type="entry name" value="D-AMINO ACID DEHYDROGENASE"/>
    <property type="match status" value="1"/>
</dbReference>
<dbReference type="PANTHER" id="PTHR13847">
    <property type="entry name" value="SARCOSINE DEHYDROGENASE-RELATED"/>
    <property type="match status" value="1"/>
</dbReference>
<dbReference type="Pfam" id="PF01266">
    <property type="entry name" value="DAO"/>
    <property type="match status" value="1"/>
</dbReference>
<dbReference type="SUPFAM" id="SSF54373">
    <property type="entry name" value="FAD-linked reductases, C-terminal domain"/>
    <property type="match status" value="1"/>
</dbReference>
<dbReference type="SUPFAM" id="SSF51905">
    <property type="entry name" value="FAD/NAD(P)-binding domain"/>
    <property type="match status" value="1"/>
</dbReference>
<feature type="chain" id="PRO_1000066122" description="D-amino acid dehydrogenase">
    <location>
        <begin position="1"/>
        <end position="429"/>
    </location>
</feature>
<feature type="binding site" evidence="1">
    <location>
        <begin position="3"/>
        <end position="17"/>
    </location>
    <ligand>
        <name>FAD</name>
        <dbReference type="ChEBI" id="CHEBI:57692"/>
    </ligand>
</feature>
<protein>
    <recommendedName>
        <fullName evidence="1">D-amino acid dehydrogenase</fullName>
        <ecNumber evidence="1">1.4.99.-</ecNumber>
    </recommendedName>
</protein>
<accession>Q3BNX3</accession>
<name>DADA_XANE5</name>
<reference key="1">
    <citation type="journal article" date="2005" name="J. Bacteriol.">
        <title>Insights into genome plasticity and pathogenicity of the plant pathogenic Bacterium Xanthomonas campestris pv. vesicatoria revealed by the complete genome sequence.</title>
        <authorList>
            <person name="Thieme F."/>
            <person name="Koebnik R."/>
            <person name="Bekel T."/>
            <person name="Berger C."/>
            <person name="Boch J."/>
            <person name="Buettner D."/>
            <person name="Caldana C."/>
            <person name="Gaigalat L."/>
            <person name="Goesmann A."/>
            <person name="Kay S."/>
            <person name="Kirchner O."/>
            <person name="Lanz C."/>
            <person name="Linke B."/>
            <person name="McHardy A.C."/>
            <person name="Meyer F."/>
            <person name="Mittenhuber G."/>
            <person name="Nies D.H."/>
            <person name="Niesbach-Kloesgen U."/>
            <person name="Patschkowski T."/>
            <person name="Rueckert C."/>
            <person name="Rupp O."/>
            <person name="Schneiker S."/>
            <person name="Schuster S.C."/>
            <person name="Vorhoelter F.J."/>
            <person name="Weber E."/>
            <person name="Puehler A."/>
            <person name="Bonas U."/>
            <person name="Bartels D."/>
            <person name="Kaiser O."/>
        </authorList>
    </citation>
    <scope>NUCLEOTIDE SEQUENCE [LARGE SCALE GENOMIC DNA]</scope>
    <source>
        <strain>85-10</strain>
    </source>
</reference>
<keyword id="KW-0274">FAD</keyword>
<keyword id="KW-0285">Flavoprotein</keyword>
<keyword id="KW-0560">Oxidoreductase</keyword>
<organism>
    <name type="scientific">Xanthomonas euvesicatoria pv. vesicatoria (strain 85-10)</name>
    <name type="common">Xanthomonas campestris pv. vesicatoria</name>
    <dbReference type="NCBI Taxonomy" id="316273"/>
    <lineage>
        <taxon>Bacteria</taxon>
        <taxon>Pseudomonadati</taxon>
        <taxon>Pseudomonadota</taxon>
        <taxon>Gammaproteobacteria</taxon>
        <taxon>Lysobacterales</taxon>
        <taxon>Lysobacteraceae</taxon>
        <taxon>Xanthomonas</taxon>
    </lineage>
</organism>
<evidence type="ECO:0000255" key="1">
    <source>
        <dbReference type="HAMAP-Rule" id="MF_01202"/>
    </source>
</evidence>
<sequence>MRVLILGSGVIGVTSAWYLAQAGCEVTVVDRQPAAALETSYANAGQLSFGYTSPWAAPGVPGKAVKWLFEQHAPLSIRPTRDLRQLAWLSQMLRNCTAERYAVNKARMVRMSDYSRDCLNALRAETGIEFEGRQLGTTQLFRTQQQLDAAAQDIEVLAQYGVPYELLSPAQIAQFEPGLAGGGAQMAGALRLPEDQTGDCRLFTQRLAELAAQAGVTFRYGQQIERLEHAGGQVSGVQIDGRMETADRYVLALGSYSADLLLSLGLHLPVYPLKGYSLTIPIVDAQRAPTSTVLDESYKIALTRFDDRIRVGGMAEVAGFDLSLNPRRRATLEMVVNDLFPGGGDLAQAEFWTGLRPATPDGTPVVGATPYANLFLNTGHGTLGWTMACGSGRYLADLMQGRTPEIDTEGLDVFRYLSPRSARAQREAA</sequence>
<proteinExistence type="inferred from homology"/>
<gene>
    <name evidence="1" type="primary">dadA</name>
    <name type="ordered locus">XCV3809</name>
</gene>
<comment type="function">
    <text evidence="1">Oxidative deamination of D-amino acids.</text>
</comment>
<comment type="catalytic activity">
    <reaction evidence="1">
        <text>a D-alpha-amino acid + A + H2O = a 2-oxocarboxylate + AH2 + NH4(+)</text>
        <dbReference type="Rhea" id="RHEA:18125"/>
        <dbReference type="ChEBI" id="CHEBI:13193"/>
        <dbReference type="ChEBI" id="CHEBI:15377"/>
        <dbReference type="ChEBI" id="CHEBI:17499"/>
        <dbReference type="ChEBI" id="CHEBI:28938"/>
        <dbReference type="ChEBI" id="CHEBI:35179"/>
        <dbReference type="ChEBI" id="CHEBI:59871"/>
    </reaction>
</comment>
<comment type="cofactor">
    <cofactor evidence="1">
        <name>FAD</name>
        <dbReference type="ChEBI" id="CHEBI:57692"/>
    </cofactor>
</comment>
<comment type="pathway">
    <text>Amino-acid degradation; D-alanine degradation; NH(3) and pyruvate from D-alanine: step 1/1.</text>
</comment>
<comment type="similarity">
    <text evidence="1">Belongs to the DadA oxidoreductase family.</text>
</comment>